<comment type="function">
    <text evidence="2">Putative cysteine synthase that catalyzes the conversion of O-acetyl-L-serine (OAS) into cysteine, the last step in the cysteine biosynthesis pathway. However, in contrast to cysteine synthase cys-17, this CS-like protein may not function in cysteine biosynthesis.</text>
</comment>
<comment type="catalytic activity">
    <reaction evidence="1">
        <text>O-acetyl-L-serine + hydrogen sulfide = L-cysteine + acetate</text>
        <dbReference type="Rhea" id="RHEA:14829"/>
        <dbReference type="ChEBI" id="CHEBI:29919"/>
        <dbReference type="ChEBI" id="CHEBI:30089"/>
        <dbReference type="ChEBI" id="CHEBI:35235"/>
        <dbReference type="ChEBI" id="CHEBI:58340"/>
        <dbReference type="EC" id="2.5.1.47"/>
    </reaction>
</comment>
<comment type="cofactor">
    <cofactor evidence="1">
        <name>pyridoxal 5'-phosphate</name>
        <dbReference type="ChEBI" id="CHEBI:597326"/>
    </cofactor>
</comment>
<comment type="subcellular location">
    <subcellularLocation>
        <location evidence="4">Mitochondrion outer membrane</location>
        <topology evidence="3">Single-pass membrane protein</topology>
    </subcellularLocation>
</comment>
<comment type="similarity">
    <text evidence="6">Belongs to the cysteine synthase/cystathionine beta-synthase family.</text>
</comment>
<keyword id="KW-0472">Membrane</keyword>
<keyword id="KW-0496">Mitochondrion</keyword>
<keyword id="KW-1000">Mitochondrion outer membrane</keyword>
<keyword id="KW-1185">Reference proteome</keyword>
<keyword id="KW-0808">Transferase</keyword>
<keyword id="KW-0812">Transmembrane</keyword>
<keyword id="KW-1133">Transmembrane helix</keyword>
<name>CYSKL_NEUCR</name>
<gene>
    <name evidence="5" type="primary">cys-12</name>
    <name type="ORF">NCU02564</name>
</gene>
<sequence>MSISDHPRVYGTVALTAAFAAGILVTLGFKDCYPELENRYQRRRNRNLSRSNGDYGVVVPTANRVHRESLIFGPVRLEDHEEVTSNINSSFDWVEGIEGCIGNTPLVMIRSLSEATGCVILAKAELLNGAGGSPKDRVALNMIQDAEERGLLVPGRGDTIYEGTVGSTGISLATLARAKGYKCHICMPNDMAIEKSQLLHHLGATVERVDPAPITSPDHFVNLARRRAREHEAVHADGSVGFFADQFESTANYQAHVKTTGPEIYRQTGGQLDAFVAGAGTGGTIAGVAKYLKEEKNLWETRVVLADPQGSGLFNKIRHGVMYSSTEREGTRRRQQVDTMVEGIGINRITENFESGRVLIDDAVRVTDEQACRMARWLVEHDGIFCGSSTAVNCVAAVVTAMKLPRGSRVVTLLCDSGNRHLSKFWKHIGDMGLENDTQAQAEDLFAELGLEELKR</sequence>
<evidence type="ECO:0000250" key="1">
    <source>
        <dbReference type="UniProtKB" id="P0ABK5"/>
    </source>
</evidence>
<evidence type="ECO:0000250" key="2">
    <source>
        <dbReference type="UniProtKB" id="Q5BD67"/>
    </source>
</evidence>
<evidence type="ECO:0000255" key="3"/>
<evidence type="ECO:0000269" key="4">
    <source>
    </source>
</evidence>
<evidence type="ECO:0000303" key="5">
    <source>
    </source>
</evidence>
<evidence type="ECO:0000305" key="6"/>
<accession>Q7SHQ1</accession>
<protein>
    <recommendedName>
        <fullName evidence="6">Cysteine synthase 2</fullName>
        <shortName>CS 2</shortName>
        <ecNumber evidence="1">2.5.1.47</ecNumber>
    </recommendedName>
    <alternativeName>
        <fullName>Cysteine synthase-like protein</fullName>
        <shortName>CSl</shortName>
    </alternativeName>
    <alternativeName>
        <fullName>O-acetylserine (thiol)-lyase 2</fullName>
        <shortName>OAS-TL 2</shortName>
    </alternativeName>
    <alternativeName>
        <fullName>O-acetylserine sulfhydrylase 2</fullName>
    </alternativeName>
</protein>
<reference key="1">
    <citation type="journal article" date="2003" name="Nature">
        <title>The genome sequence of the filamentous fungus Neurospora crassa.</title>
        <authorList>
            <person name="Galagan J.E."/>
            <person name="Calvo S.E."/>
            <person name="Borkovich K.A."/>
            <person name="Selker E.U."/>
            <person name="Read N.D."/>
            <person name="Jaffe D.B."/>
            <person name="FitzHugh W."/>
            <person name="Ma L.-J."/>
            <person name="Smirnov S."/>
            <person name="Purcell S."/>
            <person name="Rehman B."/>
            <person name="Elkins T."/>
            <person name="Engels R."/>
            <person name="Wang S."/>
            <person name="Nielsen C.B."/>
            <person name="Butler J."/>
            <person name="Endrizzi M."/>
            <person name="Qui D."/>
            <person name="Ianakiev P."/>
            <person name="Bell-Pedersen D."/>
            <person name="Nelson M.A."/>
            <person name="Werner-Washburne M."/>
            <person name="Selitrennikoff C.P."/>
            <person name="Kinsey J.A."/>
            <person name="Braun E.L."/>
            <person name="Zelter A."/>
            <person name="Schulte U."/>
            <person name="Kothe G.O."/>
            <person name="Jedd G."/>
            <person name="Mewes H.-W."/>
            <person name="Staben C."/>
            <person name="Marcotte E."/>
            <person name="Greenberg D."/>
            <person name="Roy A."/>
            <person name="Foley K."/>
            <person name="Naylor J."/>
            <person name="Stange-Thomann N."/>
            <person name="Barrett R."/>
            <person name="Gnerre S."/>
            <person name="Kamal M."/>
            <person name="Kamvysselis M."/>
            <person name="Mauceli E.W."/>
            <person name="Bielke C."/>
            <person name="Rudd S."/>
            <person name="Frishman D."/>
            <person name="Krystofova S."/>
            <person name="Rasmussen C."/>
            <person name="Metzenberg R.L."/>
            <person name="Perkins D.D."/>
            <person name="Kroken S."/>
            <person name="Cogoni C."/>
            <person name="Macino G."/>
            <person name="Catcheside D.E.A."/>
            <person name="Li W."/>
            <person name="Pratt R.J."/>
            <person name="Osmani S.A."/>
            <person name="DeSouza C.P.C."/>
            <person name="Glass N.L."/>
            <person name="Orbach M.J."/>
            <person name="Berglund J.A."/>
            <person name="Voelker R."/>
            <person name="Yarden O."/>
            <person name="Plamann M."/>
            <person name="Seiler S."/>
            <person name="Dunlap J.C."/>
            <person name="Radford A."/>
            <person name="Aramayo R."/>
            <person name="Natvig D.O."/>
            <person name="Alex L.A."/>
            <person name="Mannhaupt G."/>
            <person name="Ebbole D.J."/>
            <person name="Freitag M."/>
            <person name="Paulsen I."/>
            <person name="Sachs M.S."/>
            <person name="Lander E.S."/>
            <person name="Nusbaum C."/>
            <person name="Birren B.W."/>
        </authorList>
    </citation>
    <scope>NUCLEOTIDE SEQUENCE [LARGE SCALE GENOMIC DNA]</scope>
    <source>
        <strain>ATCC 24698 / 74-OR23-1A / CBS 708.71 / DSM 1257 / FGSC 987</strain>
    </source>
</reference>
<reference key="2">
    <citation type="journal article" date="2004" name="Adv. Genet.">
        <title>Metabolic highways of Neurospora crassa revisited.</title>
        <authorList>
            <person name="Radford A."/>
        </authorList>
    </citation>
    <scope>PATHWAY</scope>
</reference>
<reference key="3">
    <citation type="journal article" date="2006" name="Proteomics">
        <title>Proteome analysis of mitochondrial outer membrane from Neurospora crassa.</title>
        <authorList>
            <person name="Schmitt S."/>
            <person name="Prokisch H."/>
            <person name="Schlunck T."/>
            <person name="Camp D.G. II"/>
            <person name="Ahting U."/>
            <person name="Waizenegger T."/>
            <person name="Scharfe C."/>
            <person name="Meitinger T."/>
            <person name="Imhof A."/>
            <person name="Neupert W."/>
            <person name="Oefner P.J."/>
            <person name="Rapaport D."/>
        </authorList>
    </citation>
    <scope>SUBCELLULAR LOCATION [LARGE SCALE ANALYSIS]</scope>
</reference>
<dbReference type="EC" id="2.5.1.47" evidence="1"/>
<dbReference type="EMBL" id="CM002236">
    <property type="protein sequence ID" value="EAA36459.1"/>
    <property type="molecule type" value="Genomic_DNA"/>
</dbReference>
<dbReference type="RefSeq" id="XP_965695.1">
    <property type="nucleotide sequence ID" value="XM_960602.2"/>
</dbReference>
<dbReference type="SMR" id="Q7SHQ1"/>
<dbReference type="FunCoup" id="Q7SHQ1">
    <property type="interactions" value="208"/>
</dbReference>
<dbReference type="STRING" id="367110.Q7SHQ1"/>
<dbReference type="PaxDb" id="5141-EFNCRP00000002220"/>
<dbReference type="EnsemblFungi" id="EAA36459">
    <property type="protein sequence ID" value="EAA36459"/>
    <property type="gene ID" value="NCU02564"/>
</dbReference>
<dbReference type="GeneID" id="3881813"/>
<dbReference type="KEGG" id="ncr:NCU02564"/>
<dbReference type="VEuPathDB" id="FungiDB:NCU02564"/>
<dbReference type="HOGENOM" id="CLU_021018_1_0_1"/>
<dbReference type="InParanoid" id="Q7SHQ1"/>
<dbReference type="OrthoDB" id="10259545at2759"/>
<dbReference type="Proteomes" id="UP000001805">
    <property type="component" value="Chromosome 1, Linkage Group I"/>
</dbReference>
<dbReference type="GO" id="GO:0005737">
    <property type="term" value="C:cytoplasm"/>
    <property type="evidence" value="ECO:0000318"/>
    <property type="project" value="GO_Central"/>
</dbReference>
<dbReference type="GO" id="GO:0005741">
    <property type="term" value="C:mitochondrial outer membrane"/>
    <property type="evidence" value="ECO:0007669"/>
    <property type="project" value="UniProtKB-SubCell"/>
</dbReference>
<dbReference type="GO" id="GO:0004124">
    <property type="term" value="F:cysteine synthase activity"/>
    <property type="evidence" value="ECO:0000318"/>
    <property type="project" value="GO_Central"/>
</dbReference>
<dbReference type="GO" id="GO:0006535">
    <property type="term" value="P:cysteine biosynthetic process from serine"/>
    <property type="evidence" value="ECO:0000318"/>
    <property type="project" value="GO_Central"/>
</dbReference>
<dbReference type="CDD" id="cd01561">
    <property type="entry name" value="CBS_like"/>
    <property type="match status" value="1"/>
</dbReference>
<dbReference type="FunFam" id="3.40.50.1100:FF:000096">
    <property type="entry name" value="Related to cysteine synthase"/>
    <property type="match status" value="1"/>
</dbReference>
<dbReference type="Gene3D" id="3.40.50.1100">
    <property type="match status" value="2"/>
</dbReference>
<dbReference type="InterPro" id="IPR050214">
    <property type="entry name" value="Cys_Synth/Cystath_Beta-Synth"/>
</dbReference>
<dbReference type="InterPro" id="IPR001216">
    <property type="entry name" value="P-phosphate_BS"/>
</dbReference>
<dbReference type="InterPro" id="IPR001926">
    <property type="entry name" value="TrpB-like_PALP"/>
</dbReference>
<dbReference type="InterPro" id="IPR036052">
    <property type="entry name" value="TrpB-like_PALP_sf"/>
</dbReference>
<dbReference type="PANTHER" id="PTHR10314">
    <property type="entry name" value="CYSTATHIONINE BETA-SYNTHASE"/>
    <property type="match status" value="1"/>
</dbReference>
<dbReference type="Pfam" id="PF00291">
    <property type="entry name" value="PALP"/>
    <property type="match status" value="1"/>
</dbReference>
<dbReference type="SUPFAM" id="SSF53686">
    <property type="entry name" value="Tryptophan synthase beta subunit-like PLP-dependent enzymes"/>
    <property type="match status" value="1"/>
</dbReference>
<dbReference type="PROSITE" id="PS00901">
    <property type="entry name" value="CYS_SYNTHASE"/>
    <property type="match status" value="1"/>
</dbReference>
<proteinExistence type="inferred from homology"/>
<feature type="chain" id="PRO_0000436605" description="Cysteine synthase 2">
    <location>
        <begin position="1"/>
        <end position="456"/>
    </location>
</feature>
<feature type="transmembrane region" description="Helical" evidence="3">
    <location>
        <begin position="9"/>
        <end position="29"/>
    </location>
</feature>
<organism>
    <name type="scientific">Neurospora crassa (strain ATCC 24698 / 74-OR23-1A / CBS 708.71 / DSM 1257 / FGSC 987)</name>
    <dbReference type="NCBI Taxonomy" id="367110"/>
    <lineage>
        <taxon>Eukaryota</taxon>
        <taxon>Fungi</taxon>
        <taxon>Dikarya</taxon>
        <taxon>Ascomycota</taxon>
        <taxon>Pezizomycotina</taxon>
        <taxon>Sordariomycetes</taxon>
        <taxon>Sordariomycetidae</taxon>
        <taxon>Sordariales</taxon>
        <taxon>Sordariaceae</taxon>
        <taxon>Neurospora</taxon>
    </lineage>
</organism>